<organism>
    <name type="scientific">Homo sapiens</name>
    <name type="common">Human</name>
    <dbReference type="NCBI Taxonomy" id="9606"/>
    <lineage>
        <taxon>Eukaryota</taxon>
        <taxon>Metazoa</taxon>
        <taxon>Chordata</taxon>
        <taxon>Craniata</taxon>
        <taxon>Vertebrata</taxon>
        <taxon>Euteleostomi</taxon>
        <taxon>Mammalia</taxon>
        <taxon>Eutheria</taxon>
        <taxon>Euarchontoglires</taxon>
        <taxon>Primates</taxon>
        <taxon>Haplorrhini</taxon>
        <taxon>Catarrhini</taxon>
        <taxon>Hominidae</taxon>
        <taxon>Homo</taxon>
    </lineage>
</organism>
<comment type="function">
    <text evidence="1">May play an role in the regulation of Ins(1,4,5)P3 around the endoplasmic reticulum.</text>
</comment>
<comment type="interaction">
    <interactant intactId="EBI-311059">
        <id>Q9UPR0</id>
    </interactant>
    <interactant intactId="EBI-348399">
        <id>P22607</id>
        <label>FGFR3</label>
    </interactant>
    <organismsDiffer>false</organismsDiffer>
    <experiments>3</experiments>
</comment>
<comment type="interaction">
    <interactant intactId="EBI-311059">
        <id>Q9UPR0</id>
    </interactant>
    <interactant intactId="EBI-351506">
        <id>P06396</id>
        <label>GSN</label>
    </interactant>
    <organismsDiffer>false</organismsDiffer>
    <experiments>3</experiments>
</comment>
<comment type="interaction">
    <interactant intactId="EBI-311059">
        <id>Q9UPR0</id>
    </interactant>
    <interactant intactId="EBI-350145">
        <id>P01112</id>
        <label>HRAS</label>
    </interactant>
    <organismsDiffer>false</organismsDiffer>
    <experiments>3</experiments>
</comment>
<comment type="interaction">
    <interactant intactId="EBI-311059">
        <id>Q9UPR0</id>
    </interactant>
    <interactant intactId="EBI-751720">
        <id>P49914</id>
        <label>MTHFS</label>
    </interactant>
    <organismsDiffer>false</organismsDiffer>
    <experiments>2</experiments>
</comment>
<comment type="interaction">
    <interactant intactId="EBI-311059">
        <id>Q9UPR0</id>
    </interactant>
    <interactant intactId="EBI-357253">
        <id>P62136</id>
        <label>PPP1CA</label>
    </interactant>
    <organismsDiffer>false</organismsDiffer>
    <experiments>3</experiments>
</comment>
<comment type="subcellular location">
    <subcellularLocation>
        <location>Cytoplasm</location>
    </subcellularLocation>
    <text evidence="1">Predominantly localized to perinuclear areas in both myoblast and myotube C2C12 cells.</text>
</comment>
<comment type="alternative products">
    <event type="alternative splicing"/>
    <isoform>
        <id>Q9UPR0-1</id>
        <name>1</name>
        <sequence type="displayed"/>
    </isoform>
    <isoform>
        <id>Q9UPR0-2</id>
        <name>2</name>
        <sequence type="described" ref="VSP_025790 VSP_025791 VSP_025792"/>
    </isoform>
    <isoform>
        <id>Q9UPR0-3</id>
        <name>3</name>
        <sequence type="described" ref="VSP_025790"/>
    </isoform>
</comment>
<comment type="caution">
    <text evidence="11">In the PI-PLC X-box Thr-486 is present instead of the conserved His which is one of the active site residues. It is therefore expected that this protein lacks catalytic activity.</text>
</comment>
<comment type="sequence caution" evidence="11">
    <conflict type="erroneous initiation">
        <sequence resource="EMBL-CDS" id="BAA83044"/>
    </conflict>
</comment>
<comment type="sequence caution" evidence="11">
    <conflict type="erroneous initiation">
        <sequence resource="EMBL-CDS" id="BAB14606"/>
    </conflict>
</comment>
<proteinExistence type="evidence at protein level"/>
<evidence type="ECO:0000250" key="1"/>
<evidence type="ECO:0000250" key="2">
    <source>
        <dbReference type="UniProtKB" id="Q8K394"/>
    </source>
</evidence>
<evidence type="ECO:0000255" key="3">
    <source>
        <dbReference type="PROSITE-ProRule" id="PRU00041"/>
    </source>
</evidence>
<evidence type="ECO:0000255" key="4">
    <source>
        <dbReference type="PROSITE-ProRule" id="PRU00145"/>
    </source>
</evidence>
<evidence type="ECO:0000255" key="5">
    <source>
        <dbReference type="PROSITE-ProRule" id="PRU00270"/>
    </source>
</evidence>
<evidence type="ECO:0000255" key="6">
    <source>
        <dbReference type="PROSITE-ProRule" id="PRU00271"/>
    </source>
</evidence>
<evidence type="ECO:0000256" key="7">
    <source>
        <dbReference type="SAM" id="MobiDB-lite"/>
    </source>
</evidence>
<evidence type="ECO:0000269" key="8">
    <source>
    </source>
</evidence>
<evidence type="ECO:0000303" key="9">
    <source>
    </source>
</evidence>
<evidence type="ECO:0000303" key="10">
    <source>
    </source>
</evidence>
<evidence type="ECO:0000305" key="11"/>
<evidence type="ECO:0007744" key="12">
    <source>
    </source>
</evidence>
<evidence type="ECO:0007744" key="13">
    <source>
    </source>
</evidence>
<evidence type="ECO:0007744" key="14">
    <source>
    </source>
</evidence>
<evidence type="ECO:0007744" key="15">
    <source>
    </source>
</evidence>
<evidence type="ECO:0007744" key="16">
    <source>
    </source>
</evidence>
<evidence type="ECO:0007744" key="17">
    <source>
    </source>
</evidence>
<name>PLCL2_HUMAN</name>
<feature type="initiator methionine" description="Removed" evidence="13">
    <location>
        <position position="1"/>
    </location>
</feature>
<feature type="chain" id="PRO_0000288851" description="Inactive phospholipase C-like protein 2">
    <location>
        <begin position="2"/>
        <end position="1127"/>
    </location>
</feature>
<feature type="domain" description="PH" evidence="4">
    <location>
        <begin position="141"/>
        <end position="251"/>
    </location>
</feature>
<feature type="domain" description="PI-PLC X-box" evidence="5">
    <location>
        <begin position="426"/>
        <end position="570"/>
    </location>
</feature>
<feature type="domain" description="PI-PLC Y-box" evidence="6">
    <location>
        <begin position="618"/>
        <end position="734"/>
    </location>
</feature>
<feature type="domain" description="C2" evidence="3">
    <location>
        <begin position="734"/>
        <end position="863"/>
    </location>
</feature>
<feature type="region of interest" description="Disordered" evidence="7">
    <location>
        <begin position="1"/>
        <end position="128"/>
    </location>
</feature>
<feature type="region of interest" description="Disordered" evidence="7">
    <location>
        <begin position="1101"/>
        <end position="1127"/>
    </location>
</feature>
<feature type="compositionally biased region" description="Gly residues" evidence="7">
    <location>
        <begin position="1"/>
        <end position="11"/>
    </location>
</feature>
<feature type="compositionally biased region" description="Low complexity" evidence="7">
    <location>
        <begin position="19"/>
        <end position="31"/>
    </location>
</feature>
<feature type="compositionally biased region" description="Gly residues" evidence="7">
    <location>
        <begin position="32"/>
        <end position="42"/>
    </location>
</feature>
<feature type="compositionally biased region" description="Basic and acidic residues" evidence="7">
    <location>
        <begin position="1106"/>
        <end position="1127"/>
    </location>
</feature>
<feature type="modified residue" description="N-acetylalanine" evidence="13">
    <location>
        <position position="2"/>
    </location>
</feature>
<feature type="modified residue" description="Phosphoserine" evidence="14 16">
    <location>
        <position position="17"/>
    </location>
</feature>
<feature type="modified residue" description="Phosphothreonine" evidence="2">
    <location>
        <position position="84"/>
    </location>
</feature>
<feature type="modified residue" description="Phosphothreonine" evidence="12 14 17">
    <location>
        <position position="584"/>
    </location>
</feature>
<feature type="modified residue" description="Phosphoserine" evidence="12 14 15">
    <location>
        <position position="1113"/>
    </location>
</feature>
<feature type="splice variant" id="VSP_025790" description="In isoform 2 and isoform 3." evidence="9 10">
    <location>
        <begin position="1"/>
        <end position="126"/>
    </location>
</feature>
<feature type="splice variant" id="VSP_025791" description="In isoform 2." evidence="9">
    <original>GQADLLKYAKNETLENLK</original>
    <variation>IRKTGRRSIFVPQTPIMV</variation>
    <location>
        <begin position="1069"/>
        <end position="1086"/>
    </location>
</feature>
<feature type="splice variant" id="VSP_025792" description="In isoform 2." evidence="9">
    <location>
        <begin position="1087"/>
        <end position="1127"/>
    </location>
</feature>
<feature type="sequence variant" id="VAR_032507" description="In dbSNP:rs17853614." evidence="8">
    <original>Q</original>
    <variation>R</variation>
    <location>
        <position position="211"/>
    </location>
</feature>
<feature type="sequence variant" id="VAR_032508" description="In dbSNP:rs17857109." evidence="8">
    <original>V</original>
    <variation>M</variation>
    <location>
        <position position="635"/>
    </location>
</feature>
<feature type="sequence variant" id="VAR_032509" description="In dbSNP:rs17857110." evidence="8">
    <original>A</original>
    <variation>V</variation>
    <location>
        <position position="742"/>
    </location>
</feature>
<feature type="sequence variant" id="VAR_032510" description="In dbSNP:rs17853612." evidence="8">
    <original>P</original>
    <variation>H</variation>
    <location>
        <position position="809"/>
    </location>
</feature>
<feature type="sequence variant" id="VAR_032511" description="In dbSNP:rs17853613." evidence="8">
    <original>H</original>
    <variation>R</variation>
    <location>
        <position position="890"/>
    </location>
</feature>
<sequence>MAECGRGGAAGGALPTSPGPALGAKGALKAGVGEGGGGGGRLGHGRARYDSGGVSNGDCSLGVSGDEARASPTRGPRGVALAPTPSAVVCTLPRESKPGGLPRRSSIIKDGTKQKRERKKTVSFSSMPTEKKISSASDCINSMVEGSELKKVRSNSRIYHRYFLLDADMQSLRWEPSKKDSEKAKIDIKSIKEVRTGKNTDIFRSNGISDQISEDCAFSVIYGENYESLDLVANSADVANIWVTGLRYLISYGKHTLDMLESSQDNMRTSWVSQMFSEIDVDNLGHITLCNAVQCIRNLNPGLKTSKIELKFKELHKSKDKAGTEVTKEEFIEVFHELCTRPEIYFLLVQFSSNKEFLDTKDLMMFLEAEQGVAHINEEISLEIIHKYEPSKEGQEKGWLSIDGFTNYLMSPDCYIFDPEHKKVCQDMKQPLSHYFINSSHNTYLIEDQFRGPSDITGYIRALKMGCRSVELDVWDGPDNEPVIYTGHTMTSQIVFRSVIDIINKYAFFASEYPLILCLENHCSIKQQKVMVQHMKKLLGDKLYTTSPNVEESYLPSPDVLKGKILIKAKKLSSNCSGVEGDVTDEDEGAEMSQRMGKENMEQPNNVPVKRFQLCKELSELVSICKSVQFKEFQVSFQVQKYWEVCSFNEVLASKYANENPGDFVNYNKRFLARVFPSPMRIDSSNMNPQDFWKCGCQIVAMNFQTPGLMMDLNIGWFRQNGNCGYVLRPAIMREEVSFFSANTKDSVPGVSPQLLHIKIISGQNFPKPKGSGAKGDVVDPYVYVEIHGIPADCAEQRTKTVHQNGDAPIFDESFEFQINLPELAMVRFVVLDDDYIGDEFIGQYTIPFECLQTGYRHVPLQSLTGEVLAHASLFVHVAITNRRGGGKPHKRGLSVRKGKKSREYASLRTLWIKTVDEVFKNAQPPIRDATDLRENMQNAVVSFKELCGLSSVANLMQCMLAVSPRFLGPDNTPLVVLNLSEQYPTMELQGIVPEVLKKIVTTYDMMIQSLKALIENADAVYEKIVHCQKAAMEFHEHLHSIGTKEGLKERKLQKAVESFTWNITILKGQADLLKYAKNETLENLKQIHFAAVSCGLNKPGTENADVQKPRRSLEVIPEKANDETGE</sequence>
<accession>Q9UPR0</accession>
<accession>A8K5V4</accession>
<accession>Q8N498</accession>
<accession>Q9H8L0</accession>
<accession>Q9UFP9</accession>
<keyword id="KW-0007">Acetylation</keyword>
<keyword id="KW-0025">Alternative splicing</keyword>
<keyword id="KW-0963">Cytoplasm</keyword>
<keyword id="KW-0597">Phosphoprotein</keyword>
<keyword id="KW-1267">Proteomics identification</keyword>
<keyword id="KW-1185">Reference proteome</keyword>
<keyword id="KW-0807">Transducer</keyword>
<gene>
    <name type="primary">PLCL2</name>
    <name type="synonym">KIAA1092</name>
    <name type="synonym">PLCE2</name>
</gene>
<reference key="1">
    <citation type="journal article" date="1999" name="DNA Res.">
        <title>Prediction of the coding sequences of unidentified human genes. XIV. The complete sequences of 100 new cDNA clones from brain which code for large proteins in vitro.</title>
        <authorList>
            <person name="Kikuno R."/>
            <person name="Nagase T."/>
            <person name="Ishikawa K."/>
            <person name="Hirosawa M."/>
            <person name="Miyajima N."/>
            <person name="Tanaka A."/>
            <person name="Kotani H."/>
            <person name="Nomura N."/>
            <person name="Ohara O."/>
        </authorList>
    </citation>
    <scope>NUCLEOTIDE SEQUENCE [LARGE SCALE MRNA] (ISOFORM 1)</scope>
    <source>
        <tissue>Brain</tissue>
    </source>
</reference>
<reference key="2">
    <citation type="journal article" date="2004" name="Nat. Genet.">
        <title>Complete sequencing and characterization of 21,243 full-length human cDNAs.</title>
        <authorList>
            <person name="Ota T."/>
            <person name="Suzuki Y."/>
            <person name="Nishikawa T."/>
            <person name="Otsuki T."/>
            <person name="Sugiyama T."/>
            <person name="Irie R."/>
            <person name="Wakamatsu A."/>
            <person name="Hayashi K."/>
            <person name="Sato H."/>
            <person name="Nagai K."/>
            <person name="Kimura K."/>
            <person name="Makita H."/>
            <person name="Sekine M."/>
            <person name="Obayashi M."/>
            <person name="Nishi T."/>
            <person name="Shibahara T."/>
            <person name="Tanaka T."/>
            <person name="Ishii S."/>
            <person name="Yamamoto J."/>
            <person name="Saito K."/>
            <person name="Kawai Y."/>
            <person name="Isono Y."/>
            <person name="Nakamura Y."/>
            <person name="Nagahari K."/>
            <person name="Murakami K."/>
            <person name="Yasuda T."/>
            <person name="Iwayanagi T."/>
            <person name="Wagatsuma M."/>
            <person name="Shiratori A."/>
            <person name="Sudo H."/>
            <person name="Hosoiri T."/>
            <person name="Kaku Y."/>
            <person name="Kodaira H."/>
            <person name="Kondo H."/>
            <person name="Sugawara M."/>
            <person name="Takahashi M."/>
            <person name="Kanda K."/>
            <person name="Yokoi T."/>
            <person name="Furuya T."/>
            <person name="Kikkawa E."/>
            <person name="Omura Y."/>
            <person name="Abe K."/>
            <person name="Kamihara K."/>
            <person name="Katsuta N."/>
            <person name="Sato K."/>
            <person name="Tanikawa M."/>
            <person name="Yamazaki M."/>
            <person name="Ninomiya K."/>
            <person name="Ishibashi T."/>
            <person name="Yamashita H."/>
            <person name="Murakawa K."/>
            <person name="Fujimori K."/>
            <person name="Tanai H."/>
            <person name="Kimata M."/>
            <person name="Watanabe M."/>
            <person name="Hiraoka S."/>
            <person name="Chiba Y."/>
            <person name="Ishida S."/>
            <person name="Ono Y."/>
            <person name="Takiguchi S."/>
            <person name="Watanabe S."/>
            <person name="Yosida M."/>
            <person name="Hotuta T."/>
            <person name="Kusano J."/>
            <person name="Kanehori K."/>
            <person name="Takahashi-Fujii A."/>
            <person name="Hara H."/>
            <person name="Tanase T.-O."/>
            <person name="Nomura Y."/>
            <person name="Togiya S."/>
            <person name="Komai F."/>
            <person name="Hara R."/>
            <person name="Takeuchi K."/>
            <person name="Arita M."/>
            <person name="Imose N."/>
            <person name="Musashino K."/>
            <person name="Yuuki H."/>
            <person name="Oshima A."/>
            <person name="Sasaki N."/>
            <person name="Aotsuka S."/>
            <person name="Yoshikawa Y."/>
            <person name="Matsunawa H."/>
            <person name="Ichihara T."/>
            <person name="Shiohata N."/>
            <person name="Sano S."/>
            <person name="Moriya S."/>
            <person name="Momiyama H."/>
            <person name="Satoh N."/>
            <person name="Takami S."/>
            <person name="Terashima Y."/>
            <person name="Suzuki O."/>
            <person name="Nakagawa S."/>
            <person name="Senoh A."/>
            <person name="Mizoguchi H."/>
            <person name="Goto Y."/>
            <person name="Shimizu F."/>
            <person name="Wakebe H."/>
            <person name="Hishigaki H."/>
            <person name="Watanabe T."/>
            <person name="Sugiyama A."/>
            <person name="Takemoto M."/>
            <person name="Kawakami B."/>
            <person name="Yamazaki M."/>
            <person name="Watanabe K."/>
            <person name="Kumagai A."/>
            <person name="Itakura S."/>
            <person name="Fukuzumi Y."/>
            <person name="Fujimori Y."/>
            <person name="Komiyama M."/>
            <person name="Tashiro H."/>
            <person name="Tanigami A."/>
            <person name="Fujiwara T."/>
            <person name="Ono T."/>
            <person name="Yamada K."/>
            <person name="Fujii Y."/>
            <person name="Ozaki K."/>
            <person name="Hirao M."/>
            <person name="Ohmori Y."/>
            <person name="Kawabata A."/>
            <person name="Hikiji T."/>
            <person name="Kobatake N."/>
            <person name="Inagaki H."/>
            <person name="Ikema Y."/>
            <person name="Okamoto S."/>
            <person name="Okitani R."/>
            <person name="Kawakami T."/>
            <person name="Noguchi S."/>
            <person name="Itoh T."/>
            <person name="Shigeta K."/>
            <person name="Senba T."/>
            <person name="Matsumura K."/>
            <person name="Nakajima Y."/>
            <person name="Mizuno T."/>
            <person name="Morinaga M."/>
            <person name="Sasaki M."/>
            <person name="Togashi T."/>
            <person name="Oyama M."/>
            <person name="Hata H."/>
            <person name="Watanabe M."/>
            <person name="Komatsu T."/>
            <person name="Mizushima-Sugano J."/>
            <person name="Satoh T."/>
            <person name="Shirai Y."/>
            <person name="Takahashi Y."/>
            <person name="Nakagawa K."/>
            <person name="Okumura K."/>
            <person name="Nagase T."/>
            <person name="Nomura N."/>
            <person name="Kikuchi H."/>
            <person name="Masuho Y."/>
            <person name="Yamashita R."/>
            <person name="Nakai K."/>
            <person name="Yada T."/>
            <person name="Nakamura Y."/>
            <person name="Ohara O."/>
            <person name="Isogai T."/>
            <person name="Sugano S."/>
        </authorList>
    </citation>
    <scope>NUCLEOTIDE SEQUENCE [LARGE SCALE MRNA] (ISOFORM 3)</scope>
    <scope>NUCLEOTIDE SEQUENCE [LARGE SCALE MRNA] OF 384-1127 (ISOFORM 2)</scope>
    <source>
        <tissue>Brain</tissue>
        <tissue>Placenta</tissue>
    </source>
</reference>
<reference key="3">
    <citation type="journal article" date="2004" name="Genome Res.">
        <title>The status, quality, and expansion of the NIH full-length cDNA project: the Mammalian Gene Collection (MGC).</title>
        <authorList>
            <consortium name="The MGC Project Team"/>
        </authorList>
    </citation>
    <scope>NUCLEOTIDE SEQUENCE [LARGE SCALE MRNA] (ISOFORM 3)</scope>
    <scope>VARIANTS ARG-211; MET-635; VAL-742; HIS-809 AND ARG-890</scope>
    <source>
        <tissue>Brain</tissue>
    </source>
</reference>
<reference key="4">
    <citation type="journal article" date="2007" name="BMC Genomics">
        <title>The full-ORF clone resource of the German cDNA consortium.</title>
        <authorList>
            <person name="Bechtel S."/>
            <person name="Rosenfelder H."/>
            <person name="Duda A."/>
            <person name="Schmidt C.P."/>
            <person name="Ernst U."/>
            <person name="Wellenreuther R."/>
            <person name="Mehrle A."/>
            <person name="Schuster C."/>
            <person name="Bahr A."/>
            <person name="Bloecker H."/>
            <person name="Heubner D."/>
            <person name="Hoerlein A."/>
            <person name="Michel G."/>
            <person name="Wedler H."/>
            <person name="Koehrer K."/>
            <person name="Ottenwaelder B."/>
            <person name="Poustka A."/>
            <person name="Wiemann S."/>
            <person name="Schupp I."/>
        </authorList>
    </citation>
    <scope>NUCLEOTIDE SEQUENCE [LARGE SCALE MRNA] OF 918-1127</scope>
    <source>
        <tissue>Testis</tissue>
    </source>
</reference>
<reference key="5">
    <citation type="journal article" date="2008" name="Proc. Natl. Acad. Sci. U.S.A.">
        <title>A quantitative atlas of mitotic phosphorylation.</title>
        <authorList>
            <person name="Dephoure N."/>
            <person name="Zhou C."/>
            <person name="Villen J."/>
            <person name="Beausoleil S.A."/>
            <person name="Bakalarski C.E."/>
            <person name="Elledge S.J."/>
            <person name="Gygi S.P."/>
        </authorList>
    </citation>
    <scope>PHOSPHORYLATION [LARGE SCALE ANALYSIS] AT THR-584 AND SER-1113</scope>
    <scope>IDENTIFICATION BY MASS SPECTROMETRY [LARGE SCALE ANALYSIS]</scope>
    <source>
        <tissue>Cervix carcinoma</tissue>
    </source>
</reference>
<reference key="6">
    <citation type="journal article" date="2009" name="Anal. Chem.">
        <title>Lys-N and trypsin cover complementary parts of the phosphoproteome in a refined SCX-based approach.</title>
        <authorList>
            <person name="Gauci S."/>
            <person name="Helbig A.O."/>
            <person name="Slijper M."/>
            <person name="Krijgsveld J."/>
            <person name="Heck A.J."/>
            <person name="Mohammed S."/>
        </authorList>
    </citation>
    <scope>ACETYLATION [LARGE SCALE ANALYSIS] AT ALA-2</scope>
    <scope>CLEAVAGE OF INITIATOR METHIONINE [LARGE SCALE ANALYSIS]</scope>
    <scope>IDENTIFICATION BY MASS SPECTROMETRY [LARGE SCALE ANALYSIS]</scope>
</reference>
<reference key="7">
    <citation type="journal article" date="2009" name="Sci. Signal.">
        <title>Quantitative phosphoproteomic analysis of T cell receptor signaling reveals system-wide modulation of protein-protein interactions.</title>
        <authorList>
            <person name="Mayya V."/>
            <person name="Lundgren D.H."/>
            <person name="Hwang S.-I."/>
            <person name="Rezaul K."/>
            <person name="Wu L."/>
            <person name="Eng J.K."/>
            <person name="Rodionov V."/>
            <person name="Han D.K."/>
        </authorList>
    </citation>
    <scope>PHOSPHORYLATION [LARGE SCALE ANALYSIS] AT SER-17; THR-584 AND SER-1113</scope>
    <scope>IDENTIFICATION BY MASS SPECTROMETRY [LARGE SCALE ANALYSIS]</scope>
    <source>
        <tissue>Leukemic T-cell</tissue>
    </source>
</reference>
<reference key="8">
    <citation type="journal article" date="2010" name="Sci. Signal.">
        <title>Quantitative phosphoproteomics reveals widespread full phosphorylation site occupancy during mitosis.</title>
        <authorList>
            <person name="Olsen J.V."/>
            <person name="Vermeulen M."/>
            <person name="Santamaria A."/>
            <person name="Kumar C."/>
            <person name="Miller M.L."/>
            <person name="Jensen L.J."/>
            <person name="Gnad F."/>
            <person name="Cox J."/>
            <person name="Jensen T.S."/>
            <person name="Nigg E.A."/>
            <person name="Brunak S."/>
            <person name="Mann M."/>
        </authorList>
    </citation>
    <scope>PHOSPHORYLATION [LARGE SCALE ANALYSIS] AT SER-1113</scope>
    <scope>IDENTIFICATION BY MASS SPECTROMETRY [LARGE SCALE ANALYSIS]</scope>
    <source>
        <tissue>Cervix carcinoma</tissue>
    </source>
</reference>
<reference key="9">
    <citation type="journal article" date="2013" name="J. Proteome Res.">
        <title>Toward a comprehensive characterization of a human cancer cell phosphoproteome.</title>
        <authorList>
            <person name="Zhou H."/>
            <person name="Di Palma S."/>
            <person name="Preisinger C."/>
            <person name="Peng M."/>
            <person name="Polat A.N."/>
            <person name="Heck A.J."/>
            <person name="Mohammed S."/>
        </authorList>
    </citation>
    <scope>PHOSPHORYLATION [LARGE SCALE ANALYSIS] AT SER-17</scope>
    <scope>IDENTIFICATION BY MASS SPECTROMETRY [LARGE SCALE ANALYSIS]</scope>
    <source>
        <tissue>Cervix carcinoma</tissue>
    </source>
</reference>
<reference key="10">
    <citation type="journal article" date="2014" name="J. Proteomics">
        <title>An enzyme assisted RP-RPLC approach for in-depth analysis of human liver phosphoproteome.</title>
        <authorList>
            <person name="Bian Y."/>
            <person name="Song C."/>
            <person name="Cheng K."/>
            <person name="Dong M."/>
            <person name="Wang F."/>
            <person name="Huang J."/>
            <person name="Sun D."/>
            <person name="Wang L."/>
            <person name="Ye M."/>
            <person name="Zou H."/>
        </authorList>
    </citation>
    <scope>PHOSPHORYLATION [LARGE SCALE ANALYSIS] AT THR-584</scope>
    <scope>IDENTIFICATION BY MASS SPECTROMETRY [LARGE SCALE ANALYSIS]</scope>
    <source>
        <tissue>Liver</tissue>
    </source>
</reference>
<dbReference type="EMBL" id="AB029015">
    <property type="protein sequence ID" value="BAA83044.1"/>
    <property type="status" value="ALT_INIT"/>
    <property type="molecule type" value="mRNA"/>
</dbReference>
<dbReference type="EMBL" id="AK023546">
    <property type="protein sequence ID" value="BAB14606.1"/>
    <property type="status" value="ALT_INIT"/>
    <property type="molecule type" value="mRNA"/>
</dbReference>
<dbReference type="EMBL" id="AK291419">
    <property type="protein sequence ID" value="BAF84108.1"/>
    <property type="molecule type" value="mRNA"/>
</dbReference>
<dbReference type="EMBL" id="BC036392">
    <property type="protein sequence ID" value="AAH36392.1"/>
    <property type="molecule type" value="mRNA"/>
</dbReference>
<dbReference type="EMBL" id="AL117515">
    <property type="protein sequence ID" value="CAB55974.1"/>
    <property type="molecule type" value="mRNA"/>
</dbReference>
<dbReference type="CCDS" id="CCDS33713.1">
    <molecule id="Q9UPR0-3"/>
</dbReference>
<dbReference type="CCDS" id="CCDS74911.1">
    <molecule id="Q9UPR0-1"/>
</dbReference>
<dbReference type="PIR" id="T17284">
    <property type="entry name" value="T17284"/>
</dbReference>
<dbReference type="RefSeq" id="NP_001137854.1">
    <molecule id="Q9UPR0-1"/>
    <property type="nucleotide sequence ID" value="NM_001144382.2"/>
</dbReference>
<dbReference type="RefSeq" id="NP_055999.2">
    <molecule id="Q9UPR0-3"/>
    <property type="nucleotide sequence ID" value="NM_015184.5"/>
</dbReference>
<dbReference type="RefSeq" id="XP_016861511.1">
    <property type="nucleotide sequence ID" value="XM_017006022.1"/>
</dbReference>
<dbReference type="RefSeq" id="XP_016861512.1">
    <property type="nucleotide sequence ID" value="XM_017006023.1"/>
</dbReference>
<dbReference type="RefSeq" id="XP_016861513.1">
    <property type="nucleotide sequence ID" value="XM_017006024.1"/>
</dbReference>
<dbReference type="RefSeq" id="XP_016861514.1">
    <molecule id="Q9UPR0-3"/>
    <property type="nucleotide sequence ID" value="XM_017006025.2"/>
</dbReference>
<dbReference type="RefSeq" id="XP_054188033.1">
    <molecule id="Q9UPR0-1"/>
    <property type="nucleotide sequence ID" value="XM_054332058.1"/>
</dbReference>
<dbReference type="RefSeq" id="XP_054188034.1">
    <molecule id="Q9UPR0-3"/>
    <property type="nucleotide sequence ID" value="XM_054332059.1"/>
</dbReference>
<dbReference type="RefSeq" id="XP_054201828.1">
    <molecule id="Q9UPR0-1"/>
    <property type="nucleotide sequence ID" value="XM_054345853.1"/>
</dbReference>
<dbReference type="RefSeq" id="XP_054201829.1">
    <molecule id="Q9UPR0-3"/>
    <property type="nucleotide sequence ID" value="XM_054345854.1"/>
</dbReference>
<dbReference type="SMR" id="Q9UPR0"/>
<dbReference type="BioGRID" id="116833">
    <property type="interactions" value="16"/>
</dbReference>
<dbReference type="FunCoup" id="Q9UPR0">
    <property type="interactions" value="143"/>
</dbReference>
<dbReference type="IntAct" id="Q9UPR0">
    <property type="interactions" value="13"/>
</dbReference>
<dbReference type="MINT" id="Q9UPR0"/>
<dbReference type="STRING" id="9606.ENSP00000478458"/>
<dbReference type="GlyGen" id="Q9UPR0">
    <property type="glycosylation" value="2 sites, 1 O-linked glycan (1 site)"/>
</dbReference>
<dbReference type="iPTMnet" id="Q9UPR0"/>
<dbReference type="PhosphoSitePlus" id="Q9UPR0"/>
<dbReference type="BioMuta" id="PLCL2"/>
<dbReference type="DMDM" id="148880116"/>
<dbReference type="jPOST" id="Q9UPR0"/>
<dbReference type="MassIVE" id="Q9UPR0"/>
<dbReference type="PaxDb" id="9606-ENSP00000478458"/>
<dbReference type="PeptideAtlas" id="Q9UPR0"/>
<dbReference type="ProteomicsDB" id="85423">
    <molecule id="Q9UPR0-1"/>
</dbReference>
<dbReference type="ProteomicsDB" id="85424">
    <molecule id="Q9UPR0-2"/>
</dbReference>
<dbReference type="ProteomicsDB" id="85425">
    <molecule id="Q9UPR0-3"/>
</dbReference>
<dbReference type="Pumba" id="Q9UPR0"/>
<dbReference type="Antibodypedia" id="26950">
    <property type="antibodies" value="150 antibodies from 29 providers"/>
</dbReference>
<dbReference type="DNASU" id="23228"/>
<dbReference type="Ensembl" id="ENST00000432376.5">
    <molecule id="Q9UPR0-3"/>
    <property type="protein sequence ID" value="ENSP00000412836.1"/>
    <property type="gene ID" value="ENSG00000154822.18"/>
</dbReference>
<dbReference type="Ensembl" id="ENST00000615277.5">
    <molecule id="Q9UPR0-1"/>
    <property type="protein sequence ID" value="ENSP00000478458.1"/>
    <property type="gene ID" value="ENSG00000154822.18"/>
</dbReference>
<dbReference type="Ensembl" id="ENST00000638327.1">
    <molecule id="Q9UPR0-3"/>
    <property type="protein sequence ID" value="ENSP00000491897.1"/>
    <property type="gene ID" value="ENSG00000284017.2"/>
</dbReference>
<dbReference type="Ensembl" id="ENST00000638466.2">
    <molecule id="Q9UPR0-1"/>
    <property type="protein sequence ID" value="ENSP00000492839.1"/>
    <property type="gene ID" value="ENSG00000284017.2"/>
</dbReference>
<dbReference type="GeneID" id="23228"/>
<dbReference type="KEGG" id="hsa:23228"/>
<dbReference type="MANE-Select" id="ENST00000615277.5">
    <property type="protein sequence ID" value="ENSP00000478458.1"/>
    <property type="RefSeq nucleotide sequence ID" value="NM_001144382.2"/>
    <property type="RefSeq protein sequence ID" value="NP_001137854.1"/>
</dbReference>
<dbReference type="UCSC" id="uc011awd.3">
    <molecule id="Q9UPR0-1"/>
    <property type="organism name" value="human"/>
</dbReference>
<dbReference type="AGR" id="HGNC:9064"/>
<dbReference type="CTD" id="23228"/>
<dbReference type="DisGeNET" id="23228"/>
<dbReference type="GeneCards" id="PLCL2"/>
<dbReference type="HGNC" id="HGNC:9064">
    <property type="gene designation" value="PLCL2"/>
</dbReference>
<dbReference type="HPA" id="ENSG00000154822">
    <property type="expression patterns" value="Tissue enhanced (skeletal)"/>
</dbReference>
<dbReference type="MIM" id="614276">
    <property type="type" value="gene"/>
</dbReference>
<dbReference type="neXtProt" id="NX_Q9UPR0"/>
<dbReference type="OpenTargets" id="ENSG00000154822"/>
<dbReference type="PharmGKB" id="PA33395"/>
<dbReference type="VEuPathDB" id="HostDB:ENSG00000154822"/>
<dbReference type="eggNOG" id="KOG0169">
    <property type="taxonomic scope" value="Eukaryota"/>
</dbReference>
<dbReference type="GeneTree" id="ENSGT00940000155660"/>
<dbReference type="InParanoid" id="Q9UPR0"/>
<dbReference type="OMA" id="MRTSWIS"/>
<dbReference type="OrthoDB" id="269822at2759"/>
<dbReference type="PAN-GO" id="Q9UPR0">
    <property type="GO annotations" value="1 GO annotation based on evolutionary models"/>
</dbReference>
<dbReference type="PhylomeDB" id="Q9UPR0"/>
<dbReference type="TreeFam" id="TF313216"/>
<dbReference type="PathwayCommons" id="Q9UPR0"/>
<dbReference type="SignaLink" id="Q9UPR0"/>
<dbReference type="BioGRID-ORCS" id="23228">
    <property type="hits" value="12 hits in 1151 CRISPR screens"/>
</dbReference>
<dbReference type="ChiTaRS" id="PLCL2">
    <property type="organism name" value="human"/>
</dbReference>
<dbReference type="GenomeRNAi" id="23228"/>
<dbReference type="Pharos" id="Q9UPR0">
    <property type="development level" value="Tbio"/>
</dbReference>
<dbReference type="PRO" id="PR:Q9UPR0"/>
<dbReference type="Proteomes" id="UP000005640">
    <property type="component" value="Chromosome 3"/>
</dbReference>
<dbReference type="RNAct" id="Q9UPR0">
    <property type="molecule type" value="protein"/>
</dbReference>
<dbReference type="Bgee" id="ENSG00000154822">
    <property type="expression patterns" value="Expressed in cortical plate and 106 other cell types or tissues"/>
</dbReference>
<dbReference type="ExpressionAtlas" id="Q9UPR0">
    <property type="expression patterns" value="baseline and differential"/>
</dbReference>
<dbReference type="GO" id="GO:0005737">
    <property type="term" value="C:cytoplasm"/>
    <property type="evidence" value="ECO:0007669"/>
    <property type="project" value="UniProtKB-SubCell"/>
</dbReference>
<dbReference type="GO" id="GO:0050811">
    <property type="term" value="F:GABA receptor binding"/>
    <property type="evidence" value="ECO:0000314"/>
    <property type="project" value="MGI"/>
</dbReference>
<dbReference type="GO" id="GO:0070679">
    <property type="term" value="F:inositol 1,4,5 trisphosphate binding"/>
    <property type="evidence" value="ECO:0007669"/>
    <property type="project" value="InterPro"/>
</dbReference>
<dbReference type="GO" id="GO:0004435">
    <property type="term" value="F:phosphatidylinositol-4,5-bisphosphate phospholipase C activity"/>
    <property type="evidence" value="ECO:0000318"/>
    <property type="project" value="GO_Central"/>
</dbReference>
<dbReference type="GO" id="GO:0002322">
    <property type="term" value="P:B cell proliferation involved in immune response"/>
    <property type="evidence" value="ECO:0007669"/>
    <property type="project" value="Ensembl"/>
</dbReference>
<dbReference type="GO" id="GO:0002337">
    <property type="term" value="P:B-1a B cell differentiation"/>
    <property type="evidence" value="ECO:0007669"/>
    <property type="project" value="Ensembl"/>
</dbReference>
<dbReference type="GO" id="GO:0007214">
    <property type="term" value="P:gamma-aminobutyric acid signaling pathway"/>
    <property type="evidence" value="ECO:0000318"/>
    <property type="project" value="GO_Central"/>
</dbReference>
<dbReference type="GO" id="GO:0050859">
    <property type="term" value="P:negative regulation of B cell receptor signaling pathway"/>
    <property type="evidence" value="ECO:0007669"/>
    <property type="project" value="Ensembl"/>
</dbReference>
<dbReference type="GO" id="GO:0120163">
    <property type="term" value="P:negative regulation of cold-induced thermogenesis"/>
    <property type="evidence" value="ECO:0000250"/>
    <property type="project" value="YuBioLab"/>
</dbReference>
<dbReference type="GO" id="GO:0046488">
    <property type="term" value="P:phosphatidylinositol metabolic process"/>
    <property type="evidence" value="ECO:0000318"/>
    <property type="project" value="GO_Central"/>
</dbReference>
<dbReference type="GO" id="GO:0048015">
    <property type="term" value="P:phosphatidylinositol-mediated signaling"/>
    <property type="evidence" value="ECO:0000318"/>
    <property type="project" value="GO_Central"/>
</dbReference>
<dbReference type="GO" id="GO:0032228">
    <property type="term" value="P:regulation of synaptic transmission, GABAergic"/>
    <property type="evidence" value="ECO:0000318"/>
    <property type="project" value="GO_Central"/>
</dbReference>
<dbReference type="GO" id="GO:0051209">
    <property type="term" value="P:release of sequestered calcium ion into cytosol"/>
    <property type="evidence" value="ECO:0000318"/>
    <property type="project" value="GO_Central"/>
</dbReference>
<dbReference type="CDD" id="cd00275">
    <property type="entry name" value="C2_PLC_like"/>
    <property type="match status" value="1"/>
</dbReference>
<dbReference type="CDD" id="cd16223">
    <property type="entry name" value="EFh_PRIP2"/>
    <property type="match status" value="1"/>
</dbReference>
<dbReference type="CDD" id="cd13364">
    <property type="entry name" value="PH_PLC_eta"/>
    <property type="match status" value="1"/>
</dbReference>
<dbReference type="CDD" id="cd08597">
    <property type="entry name" value="PI-PLCc_PRIP_metazoa"/>
    <property type="match status" value="1"/>
</dbReference>
<dbReference type="FunFam" id="1.10.238.10:FF:000005">
    <property type="entry name" value="Phosphoinositide phospholipase C"/>
    <property type="match status" value="1"/>
</dbReference>
<dbReference type="FunFam" id="2.30.29.30:FF:000025">
    <property type="entry name" value="Phosphoinositide phospholipase C"/>
    <property type="match status" value="1"/>
</dbReference>
<dbReference type="FunFam" id="2.60.40.150:FF:000017">
    <property type="entry name" value="Phosphoinositide phospholipase C"/>
    <property type="match status" value="1"/>
</dbReference>
<dbReference type="FunFam" id="3.20.20.190:FF:000001">
    <property type="entry name" value="Phosphoinositide phospholipase C"/>
    <property type="match status" value="1"/>
</dbReference>
<dbReference type="Gene3D" id="2.60.40.150">
    <property type="entry name" value="C2 domain"/>
    <property type="match status" value="1"/>
</dbReference>
<dbReference type="Gene3D" id="1.10.238.10">
    <property type="entry name" value="EF-hand"/>
    <property type="match status" value="1"/>
</dbReference>
<dbReference type="Gene3D" id="3.20.20.190">
    <property type="entry name" value="Phosphatidylinositol (PI) phosphodiesterase"/>
    <property type="match status" value="1"/>
</dbReference>
<dbReference type="Gene3D" id="2.30.29.30">
    <property type="entry name" value="Pleckstrin-homology domain (PH domain)/Phosphotyrosine-binding domain (PTB)"/>
    <property type="match status" value="1"/>
</dbReference>
<dbReference type="InterPro" id="IPR000008">
    <property type="entry name" value="C2_dom"/>
</dbReference>
<dbReference type="InterPro" id="IPR035892">
    <property type="entry name" value="C2_domain_sf"/>
</dbReference>
<dbReference type="InterPro" id="IPR011992">
    <property type="entry name" value="EF-hand-dom_pair"/>
</dbReference>
<dbReference type="InterPro" id="IPR011993">
    <property type="entry name" value="PH-like_dom_sf"/>
</dbReference>
<dbReference type="InterPro" id="IPR001849">
    <property type="entry name" value="PH_domain"/>
</dbReference>
<dbReference type="InterPro" id="IPR001192">
    <property type="entry name" value="PI-PLC_fam"/>
</dbReference>
<dbReference type="InterPro" id="IPR017946">
    <property type="entry name" value="PLC-like_Pdiesterase_TIM-brl"/>
</dbReference>
<dbReference type="InterPro" id="IPR015359">
    <property type="entry name" value="PLC_EF-hand-like"/>
</dbReference>
<dbReference type="InterPro" id="IPR028382">
    <property type="entry name" value="PLCL2_EFh"/>
</dbReference>
<dbReference type="InterPro" id="IPR000909">
    <property type="entry name" value="PLipase_C_PInositol-sp_X_dom"/>
</dbReference>
<dbReference type="InterPro" id="IPR001711">
    <property type="entry name" value="PLipase_C_Pinositol-sp_Y"/>
</dbReference>
<dbReference type="PANTHER" id="PTHR10336:SF84">
    <property type="entry name" value="INACTIVE PHOSPHOLIPASE C-LIKE PROTEIN 2"/>
    <property type="match status" value="1"/>
</dbReference>
<dbReference type="PANTHER" id="PTHR10336">
    <property type="entry name" value="PHOSPHOINOSITIDE-SPECIFIC PHOSPHOLIPASE C FAMILY PROTEIN"/>
    <property type="match status" value="1"/>
</dbReference>
<dbReference type="Pfam" id="PF00168">
    <property type="entry name" value="C2"/>
    <property type="match status" value="1"/>
</dbReference>
<dbReference type="Pfam" id="PF09279">
    <property type="entry name" value="EF-hand_like"/>
    <property type="match status" value="1"/>
</dbReference>
<dbReference type="Pfam" id="PF16457">
    <property type="entry name" value="PH_12"/>
    <property type="match status" value="1"/>
</dbReference>
<dbReference type="Pfam" id="PF00388">
    <property type="entry name" value="PI-PLC-X"/>
    <property type="match status" value="1"/>
</dbReference>
<dbReference type="Pfam" id="PF00387">
    <property type="entry name" value="PI-PLC-Y"/>
    <property type="match status" value="1"/>
</dbReference>
<dbReference type="PRINTS" id="PR00390">
    <property type="entry name" value="PHPHLIPASEC"/>
</dbReference>
<dbReference type="SMART" id="SM00239">
    <property type="entry name" value="C2"/>
    <property type="match status" value="1"/>
</dbReference>
<dbReference type="SMART" id="SM00233">
    <property type="entry name" value="PH"/>
    <property type="match status" value="1"/>
</dbReference>
<dbReference type="SMART" id="SM00148">
    <property type="entry name" value="PLCXc"/>
    <property type="match status" value="1"/>
</dbReference>
<dbReference type="SMART" id="SM00149">
    <property type="entry name" value="PLCYc"/>
    <property type="match status" value="1"/>
</dbReference>
<dbReference type="SUPFAM" id="SSF49562">
    <property type="entry name" value="C2 domain (Calcium/lipid-binding domain, CaLB)"/>
    <property type="match status" value="1"/>
</dbReference>
<dbReference type="SUPFAM" id="SSF47473">
    <property type="entry name" value="EF-hand"/>
    <property type="match status" value="1"/>
</dbReference>
<dbReference type="SUPFAM" id="SSF50729">
    <property type="entry name" value="PH domain-like"/>
    <property type="match status" value="1"/>
</dbReference>
<dbReference type="SUPFAM" id="SSF51695">
    <property type="entry name" value="PLC-like phosphodiesterases"/>
    <property type="match status" value="1"/>
</dbReference>
<dbReference type="PROSITE" id="PS50004">
    <property type="entry name" value="C2"/>
    <property type="match status" value="1"/>
</dbReference>
<dbReference type="PROSITE" id="PS50003">
    <property type="entry name" value="PH_DOMAIN"/>
    <property type="match status" value="1"/>
</dbReference>
<dbReference type="PROSITE" id="PS50007">
    <property type="entry name" value="PIPLC_X_DOMAIN"/>
    <property type="match status" value="1"/>
</dbReference>
<dbReference type="PROSITE" id="PS50008">
    <property type="entry name" value="PIPLC_Y_DOMAIN"/>
    <property type="match status" value="1"/>
</dbReference>
<protein>
    <recommendedName>
        <fullName>Inactive phospholipase C-like protein 2</fullName>
        <shortName>PLC-L(2)</shortName>
        <shortName>PLC-L2</shortName>
        <shortName>Phospholipase C-L2</shortName>
    </recommendedName>
    <alternativeName>
        <fullName>Phospholipase C-epsilon-2</fullName>
        <shortName>PLC-epsilon-2</shortName>
    </alternativeName>
</protein>